<organism evidence="6">
    <name type="scientific">Plasmodium falciparum (isolate 3D7)</name>
    <dbReference type="NCBI Taxonomy" id="36329"/>
    <lineage>
        <taxon>Eukaryota</taxon>
        <taxon>Sar</taxon>
        <taxon>Alveolata</taxon>
        <taxon>Apicomplexa</taxon>
        <taxon>Aconoidasida</taxon>
        <taxon>Haemosporida</taxon>
        <taxon>Plasmodiidae</taxon>
        <taxon>Plasmodium</taxon>
        <taxon>Plasmodium (Laverania)</taxon>
    </lineage>
</organism>
<dbReference type="EMBL" id="AL844508">
    <property type="protein sequence ID" value="CAD51896.1"/>
    <property type="molecule type" value="Genomic_DNA"/>
</dbReference>
<dbReference type="RefSeq" id="XP_001352085.1">
    <property type="nucleotide sequence ID" value="XM_001352049.1"/>
</dbReference>
<dbReference type="SMR" id="Q8I2T9"/>
<dbReference type="STRING" id="36329.Q8I2T9"/>
<dbReference type="PaxDb" id="5833-PFI1050c"/>
<dbReference type="EnsemblProtists" id="CAD51896">
    <property type="protein sequence ID" value="CAD51896"/>
    <property type="gene ID" value="PF3D7_0921400"/>
</dbReference>
<dbReference type="GeneID" id="813490"/>
<dbReference type="KEGG" id="pfa:PF3D7_0921400"/>
<dbReference type="VEuPathDB" id="PlasmoDB:PF3D7_0921400"/>
<dbReference type="HOGENOM" id="CLU_1144508_0_0_1"/>
<dbReference type="InParanoid" id="Q8I2T9"/>
<dbReference type="OMA" id="YYELNHE"/>
<dbReference type="OrthoDB" id="565552at2759"/>
<dbReference type="PhylomeDB" id="Q8I2T9"/>
<dbReference type="UniPathway" id="UPA00266"/>
<dbReference type="Proteomes" id="UP000001450">
    <property type="component" value="Chromosome 9"/>
</dbReference>
<dbReference type="GO" id="GO:0020011">
    <property type="term" value="C:apicoplast"/>
    <property type="evidence" value="ECO:0007669"/>
    <property type="project" value="UniProtKB-SubCell"/>
</dbReference>
<dbReference type="GO" id="GO:0005739">
    <property type="term" value="C:mitochondrion"/>
    <property type="evidence" value="ECO:0000318"/>
    <property type="project" value="GO_Central"/>
</dbReference>
<dbReference type="GO" id="GO:0051539">
    <property type="term" value="F:4 iron, 4 sulfur cluster binding"/>
    <property type="evidence" value="ECO:0000318"/>
    <property type="project" value="GO_Central"/>
</dbReference>
<dbReference type="GO" id="GO:0005506">
    <property type="term" value="F:iron ion binding"/>
    <property type="evidence" value="ECO:0007669"/>
    <property type="project" value="InterPro"/>
</dbReference>
<dbReference type="GO" id="GO:0016226">
    <property type="term" value="P:iron-sulfur cluster assembly"/>
    <property type="evidence" value="ECO:0007669"/>
    <property type="project" value="InterPro"/>
</dbReference>
<dbReference type="FunFam" id="3.30.300.130:FF:000013">
    <property type="entry name" value="NifU-like scaffold protein, putative"/>
    <property type="match status" value="1"/>
</dbReference>
<dbReference type="Gene3D" id="3.30.300.130">
    <property type="entry name" value="Fe-S cluster assembly (FSCA)"/>
    <property type="match status" value="1"/>
</dbReference>
<dbReference type="InterPro" id="IPR034904">
    <property type="entry name" value="FSCA_dom_sf"/>
</dbReference>
<dbReference type="InterPro" id="IPR001075">
    <property type="entry name" value="NIF_FeS_clus_asmbl_NifU_C"/>
</dbReference>
<dbReference type="PANTHER" id="PTHR11178">
    <property type="entry name" value="IRON-SULFUR CLUSTER SCAFFOLD PROTEIN NFU-RELATED"/>
    <property type="match status" value="1"/>
</dbReference>
<dbReference type="PANTHER" id="PTHR11178:SF25">
    <property type="entry name" value="NIFU-LIKE PROTEIN 3, CHLOROPLASTIC"/>
    <property type="match status" value="1"/>
</dbReference>
<dbReference type="Pfam" id="PF01106">
    <property type="entry name" value="NifU"/>
    <property type="match status" value="1"/>
</dbReference>
<dbReference type="SUPFAM" id="SSF117916">
    <property type="entry name" value="Fe-S cluster assembly (FSCA) domain-like"/>
    <property type="match status" value="1"/>
</dbReference>
<sequence length="247" mass="29104">MNCIFLSVLFIWYFFFVYVKNLSILQYDKAKVLFIQNNFEPLNNNMLRVPLNILRKRTYVVKNKKNGVPFQIFLSSENDEGLYYELNPENVEKVLNLIRPKLQIDNGDVELVDIKNNDLYIRLLGNCVTCSSNSITVSHVIKKTLKMYIRNEQNQEPNVIITNFDEINEQNIQNCLSQLKPYLDFLKVEVIIKELVNNKENINNYVCLKFLNIENSSEEINIPHNVKNEITERLKQKFPTLTVNFEN</sequence>
<evidence type="ECO:0000250" key="1">
    <source>
        <dbReference type="UniProtKB" id="A0A509AKQ7"/>
    </source>
</evidence>
<evidence type="ECO:0000269" key="2">
    <source>
    </source>
</evidence>
<evidence type="ECO:0000303" key="3">
    <source>
    </source>
</evidence>
<evidence type="ECO:0000305" key="4"/>
<evidence type="ECO:0000312" key="5">
    <source>
        <dbReference type="EMBL" id="CAD51896.1"/>
    </source>
</evidence>
<evidence type="ECO:0000312" key="6">
    <source>
        <dbReference type="Proteomes" id="UP000001450"/>
    </source>
</evidence>
<gene>
    <name evidence="4" type="primary">NifU</name>
    <name evidence="5" type="ORF">PF3D7_0921400</name>
</gene>
<proteinExistence type="evidence at protein level"/>
<feature type="chain" id="PRO_0000459596" description="NifU-like scaffold protein">
    <location>
        <begin position="1"/>
        <end position="247"/>
    </location>
</feature>
<reference evidence="6" key="1">
    <citation type="journal article" date="2002" name="Nature">
        <title>Genome sequence of the human malaria parasite Plasmodium falciparum.</title>
        <authorList>
            <person name="Gardner M.J."/>
            <person name="Hall N."/>
            <person name="Fung E."/>
            <person name="White O."/>
            <person name="Berriman M."/>
            <person name="Hyman R.W."/>
            <person name="Carlton J.M."/>
            <person name="Pain A."/>
            <person name="Nelson K.E."/>
            <person name="Bowman S."/>
            <person name="Paulsen I.T."/>
            <person name="James K.D."/>
            <person name="Eisen J.A."/>
            <person name="Rutherford K.M."/>
            <person name="Salzberg S.L."/>
            <person name="Craig A."/>
            <person name="Kyes S."/>
            <person name="Chan M.-S."/>
            <person name="Nene V."/>
            <person name="Shallom S.J."/>
            <person name="Suh B."/>
            <person name="Peterson J."/>
            <person name="Angiuoli S."/>
            <person name="Pertea M."/>
            <person name="Allen J."/>
            <person name="Selengut J."/>
            <person name="Haft D."/>
            <person name="Mather M.W."/>
            <person name="Vaidya A.B."/>
            <person name="Martin D.M.A."/>
            <person name="Fairlamb A.H."/>
            <person name="Fraunholz M.J."/>
            <person name="Roos D.S."/>
            <person name="Ralph S.A."/>
            <person name="McFadden G.I."/>
            <person name="Cummings L.M."/>
            <person name="Subramanian G.M."/>
            <person name="Mungall C."/>
            <person name="Venter J.C."/>
            <person name="Carucci D.J."/>
            <person name="Hoffman S.L."/>
            <person name="Newbold C."/>
            <person name="Davis R.W."/>
            <person name="Fraser C.M."/>
            <person name="Barrell B.G."/>
        </authorList>
    </citation>
    <scope>NUCLEOTIDE SEQUENCE [LARGE SCALE GENOMIC DNA]</scope>
    <source>
        <strain evidence="6">3D7</strain>
    </source>
</reference>
<reference evidence="6" key="2">
    <citation type="journal article" date="2002" name="Nature">
        <title>Sequence of Plasmodium falciparum chromosomes 1, 3-9 and 13.</title>
        <authorList>
            <person name="Hall N."/>
            <person name="Pain A."/>
            <person name="Berriman M."/>
            <person name="Churcher C.M."/>
            <person name="Harris B."/>
            <person name="Harris D."/>
            <person name="Mungall K.L."/>
            <person name="Bowman S."/>
            <person name="Atkin R."/>
            <person name="Baker S."/>
            <person name="Barron A."/>
            <person name="Brooks K."/>
            <person name="Buckee C.O."/>
            <person name="Burrows C."/>
            <person name="Cherevach I."/>
            <person name="Chillingworth C."/>
            <person name="Chillingworth T."/>
            <person name="Christodoulou Z."/>
            <person name="Clark L."/>
            <person name="Clark R."/>
            <person name="Corton C."/>
            <person name="Cronin A."/>
            <person name="Davies R.M."/>
            <person name="Davis P."/>
            <person name="Dear P."/>
            <person name="Dearden F."/>
            <person name="Doggett J."/>
            <person name="Feltwell T."/>
            <person name="Goble A."/>
            <person name="Goodhead I."/>
            <person name="Gwilliam R."/>
            <person name="Hamlin N."/>
            <person name="Hance Z."/>
            <person name="Harper D."/>
            <person name="Hauser H."/>
            <person name="Hornsby T."/>
            <person name="Holroyd S."/>
            <person name="Horrocks P."/>
            <person name="Humphray S."/>
            <person name="Jagels K."/>
            <person name="James K.D."/>
            <person name="Johnson D."/>
            <person name="Kerhornou A."/>
            <person name="Knights A."/>
            <person name="Konfortov B."/>
            <person name="Kyes S."/>
            <person name="Larke N."/>
            <person name="Lawson D."/>
            <person name="Lennard N."/>
            <person name="Line A."/>
            <person name="Maddison M."/>
            <person name="Mclean J."/>
            <person name="Mooney P."/>
            <person name="Moule S."/>
            <person name="Murphy L."/>
            <person name="Oliver K."/>
            <person name="Ormond D."/>
            <person name="Price C."/>
            <person name="Quail M.A."/>
            <person name="Rabbinowitsch E."/>
            <person name="Rajandream M.A."/>
            <person name="Rutter S."/>
            <person name="Rutherford K.M."/>
            <person name="Sanders M."/>
            <person name="Simmonds M."/>
            <person name="Seeger K."/>
            <person name="Sharp S."/>
            <person name="Smith R."/>
            <person name="Squares R."/>
            <person name="Squares S."/>
            <person name="Stevens K."/>
            <person name="Taylor K."/>
            <person name="Tivey A."/>
            <person name="Unwin L."/>
            <person name="Whitehead S."/>
            <person name="Woodward J.R."/>
            <person name="Sulston J.E."/>
            <person name="Craig A."/>
            <person name="Newbold C."/>
            <person name="Barrell B.G."/>
        </authorList>
    </citation>
    <scope>NUCLEOTIDE SEQUENCE [LARGE SCALE GENOMIC DNA]</scope>
    <source>
        <strain evidence="6">3D7</strain>
    </source>
</reference>
<reference evidence="4" key="3">
    <citation type="journal article" date="2017" name="FEBS J.">
        <title>[Fe-S] cluster assembly in the apicoplast and its indispensability in mosquito stages of the malaria parasite.</title>
        <authorList>
            <person name="Charan M."/>
            <person name="Choudhary H.H."/>
            <person name="Singh N."/>
            <person name="Sadik M."/>
            <person name="Siddiqi M.I."/>
            <person name="Mishra S."/>
            <person name="Habib S."/>
        </authorList>
    </citation>
    <scope>FUNCTION</scope>
    <scope>SUBUNIT</scope>
</reference>
<accession>Q8I2T9</accession>
<keyword id="KW-0004">4Fe-4S</keyword>
<keyword id="KW-0933">Apicoplast</keyword>
<keyword id="KW-0408">Iron</keyword>
<keyword id="KW-0411">Iron-sulfur</keyword>
<keyword id="KW-0479">Metal-binding</keyword>
<keyword id="KW-0934">Plastid</keyword>
<keyword id="KW-1185">Reference proteome</keyword>
<comment type="function">
    <text evidence="2">Binds and transfers [4Fe-4S] iron-sulfur clusters to target proteins.</text>
</comment>
<comment type="pathway">
    <text evidence="4">Cofactor biosynthesis; iron-sulfur cluster biosynthesis.</text>
</comment>
<comment type="subunit">
    <text evidence="2">Homodimer.</text>
</comment>
<comment type="subcellular location">
    <subcellularLocation>
        <location evidence="1">Plastid</location>
        <location evidence="1">Apicoplast</location>
    </subcellularLocation>
</comment>
<comment type="similarity">
    <text evidence="4">Belongs to the NifU family.</text>
</comment>
<name>NIFU_PLAF7</name>
<protein>
    <recommendedName>
        <fullName evidence="4">NifU-like scaffold protein</fullName>
        <shortName evidence="3">PfNfu</shortName>
    </recommendedName>
</protein>